<feature type="chain" id="PRO_0000324227" description="Nuclear export protein">
    <location>
        <begin position="1"/>
        <end position="121"/>
    </location>
</feature>
<feature type="short sequence motif" description="Nuclear export signal" evidence="1">
    <location>
        <begin position="12"/>
        <end position="21"/>
    </location>
</feature>
<feature type="short sequence motif" description="Nuclear export signal" evidence="1">
    <location>
        <begin position="85"/>
        <end position="94"/>
    </location>
</feature>
<name>NEP_I83A8</name>
<reference key="1">
    <citation type="submission" date="2005-10" db="EMBL/GenBank/DDBJ databases">
        <title>The NIAID influenza genome sequencing project.</title>
        <authorList>
            <person name="Ghedin E."/>
            <person name="Spiro D."/>
            <person name="Miller N."/>
            <person name="Zaborsky J."/>
            <person name="Feldblyum T."/>
            <person name="Subbu V."/>
            <person name="Shumway M."/>
            <person name="Sparenborg J."/>
            <person name="Groveman L."/>
            <person name="Halpin R."/>
            <person name="Sitz J."/>
            <person name="Koo H."/>
            <person name="Salzberg S.L."/>
            <person name="Webster R.G."/>
            <person name="Hoffmann E."/>
            <person name="Krauss S."/>
            <person name="Naeve C."/>
            <person name="Bao Y."/>
            <person name="Bolotov P."/>
            <person name="Dernovoy D."/>
            <person name="Kiryutin B."/>
            <person name="Lipman D.J."/>
            <person name="Tatusova T."/>
        </authorList>
    </citation>
    <scope>NUCLEOTIDE SEQUENCE [GENOMIC RNA]</scope>
</reference>
<keyword id="KW-0025">Alternative splicing</keyword>
<keyword id="KW-1048">Host nucleus</keyword>
<keyword id="KW-0945">Host-virus interaction</keyword>
<keyword id="KW-0813">Transport</keyword>
<keyword id="KW-0946">Virion</keyword>
<sequence length="121" mass="14365">MDSNTVSSFQDILLRMSKMQLGSSSEDLNGMITQFESLKLYRDSLGEAVMRMGDLHLLQNRNGKWREQLGQKFEEIRWLIEEVRHRLKTTENSFEQITFMQALQLLFEVEQEIRTFSFQLI</sequence>
<evidence type="ECO:0000255" key="1">
    <source>
        <dbReference type="HAMAP-Rule" id="MF_04067"/>
    </source>
</evidence>
<dbReference type="EMBL" id="CY003740">
    <property type="protein sequence ID" value="ABB04945.1"/>
    <property type="molecule type" value="Genomic_RNA"/>
</dbReference>
<dbReference type="SMR" id="Q38SQ3"/>
<dbReference type="Proteomes" id="UP000167548">
    <property type="component" value="Genome"/>
</dbReference>
<dbReference type="GO" id="GO:0042025">
    <property type="term" value="C:host cell nucleus"/>
    <property type="evidence" value="ECO:0007669"/>
    <property type="project" value="UniProtKB-SubCell"/>
</dbReference>
<dbReference type="GO" id="GO:0044423">
    <property type="term" value="C:virion component"/>
    <property type="evidence" value="ECO:0007669"/>
    <property type="project" value="UniProtKB-UniRule"/>
</dbReference>
<dbReference type="GO" id="GO:0039675">
    <property type="term" value="P:exit of virus from host cell nucleus through nuclear pore"/>
    <property type="evidence" value="ECO:0007669"/>
    <property type="project" value="UniProtKB-UniRule"/>
</dbReference>
<dbReference type="Gene3D" id="1.10.287.230">
    <property type="match status" value="1"/>
</dbReference>
<dbReference type="Gene3D" id="1.10.287.10">
    <property type="entry name" value="S15/NS1, RNA-binding"/>
    <property type="match status" value="1"/>
</dbReference>
<dbReference type="HAMAP" id="MF_04067">
    <property type="entry name" value="INFV_NEP"/>
    <property type="match status" value="1"/>
</dbReference>
<dbReference type="InterPro" id="IPR000968">
    <property type="entry name" value="Flu_NS2"/>
</dbReference>
<dbReference type="Pfam" id="PF00601">
    <property type="entry name" value="Flu_NS2"/>
    <property type="match status" value="1"/>
</dbReference>
<dbReference type="SUPFAM" id="SSF101156">
    <property type="entry name" value="Nonstructural protein ns2, Nep, M1-binding domain"/>
    <property type="match status" value="1"/>
</dbReference>
<gene>
    <name evidence="1" type="primary">NS</name>
</gene>
<proteinExistence type="inferred from homology"/>
<protein>
    <recommendedName>
        <fullName evidence="1">Nuclear export protein</fullName>
        <shortName evidence="1">NEP</shortName>
    </recommendedName>
    <alternativeName>
        <fullName evidence="1">Non-structural protein 2</fullName>
        <shortName evidence="1">NS2</shortName>
    </alternativeName>
</protein>
<accession>Q38SQ3</accession>
<organism>
    <name type="scientific">Influenza A virus (strain A/Hong Kong/5/1983 H3N2)</name>
    <dbReference type="NCBI Taxonomy" id="387159"/>
    <lineage>
        <taxon>Viruses</taxon>
        <taxon>Riboviria</taxon>
        <taxon>Orthornavirae</taxon>
        <taxon>Negarnaviricota</taxon>
        <taxon>Polyploviricotina</taxon>
        <taxon>Insthoviricetes</taxon>
        <taxon>Articulavirales</taxon>
        <taxon>Orthomyxoviridae</taxon>
        <taxon>Alphainfluenzavirus</taxon>
        <taxon>Alphainfluenzavirus influenzae</taxon>
        <taxon>Influenza A virus</taxon>
    </lineage>
</organism>
<organismHost>
    <name type="scientific">Aves</name>
    <dbReference type="NCBI Taxonomy" id="8782"/>
</organismHost>
<organismHost>
    <name type="scientific">Cetacea</name>
    <name type="common">whales</name>
    <dbReference type="NCBI Taxonomy" id="9721"/>
</organismHost>
<organismHost>
    <name type="scientific">Homo sapiens</name>
    <name type="common">Human</name>
    <dbReference type="NCBI Taxonomy" id="9606"/>
</organismHost>
<organismHost>
    <name type="scientific">Phocidae</name>
    <name type="common">true seals</name>
    <dbReference type="NCBI Taxonomy" id="9709"/>
</organismHost>
<organismHost>
    <name type="scientific">Sus scrofa</name>
    <name type="common">Pig</name>
    <dbReference type="NCBI Taxonomy" id="9823"/>
</organismHost>
<comment type="function">
    <text evidence="1">Mediates the nuclear export of encapsidated genomic RNAs (ribonucleoproteins, RNPs). Acts as an adapter between viral RNPs complexes and the nuclear export machinery of the cell. Possesses no intrinsic RNA-binding activity, but includes a C-terminal M1-binding domain. This domain is believed to allow recognition of RNPs bound to the protein M1. Since protein M1 is not available in large quantities before late stages of infection, such an indirect recognition mechanism probably ensures that genomic RNPs are not exported from the host nucleus until sufficient quantities of viral mRNA and progeny genomic RNA have been synthesized. Furthermore, the RNPs enter the host cytoplasm only when associated with the M1 protein that is necessary to guide them to the plasma membrane. May down-regulate viral RNA synthesis when overproduced.</text>
</comment>
<comment type="subunit">
    <text evidence="1">Interacts with protein M1. May interact with host nucleoporin RAB/HRB and exportin XPO1/CRM1.</text>
</comment>
<comment type="subcellular location">
    <subcellularLocation>
        <location evidence="1">Virion</location>
    </subcellularLocation>
    <subcellularLocation>
        <location evidence="1">Host nucleus</location>
    </subcellularLocation>
</comment>
<comment type="alternative products">
    <event type="alternative splicing"/>
    <isoform>
        <id>Q38SQ3-1</id>
        <name>NEP</name>
        <name>NS2</name>
        <sequence type="displayed"/>
    </isoform>
    <isoform>
        <id>Q38SQ2-1</id>
        <name>NS1</name>
        <sequence type="external"/>
    </isoform>
</comment>
<comment type="similarity">
    <text evidence="1">Belongs to the influenza viruses NEP family.</text>
</comment>